<accession>P83729</accession>
<organism evidence="1">
    <name type="scientific">Naegleria fowleri</name>
    <name type="common">Brain eating amoeba</name>
    <dbReference type="NCBI Taxonomy" id="5763"/>
    <lineage>
        <taxon>Eukaryota</taxon>
        <taxon>Discoba</taxon>
        <taxon>Heterolobosea</taxon>
        <taxon>Tetramitia</taxon>
        <taxon>Eutetramitia</taxon>
        <taxon>Vahlkampfiidae</taxon>
        <taxon>Naegleria</taxon>
    </lineage>
</organism>
<feature type="chain" id="PRO_0000055496" description="Unknown protein NF041 from 2D-PAGE">
    <location>
        <begin position="1"/>
        <end position="15" status="greater than"/>
    </location>
</feature>
<feature type="non-terminal residue" evidence="1">
    <location>
        <position position="15"/>
    </location>
</feature>
<sequence>DTHKSEIAHRQPDLG</sequence>
<proteinExistence type="evidence at protein level"/>
<reference evidence="1" key="1">
    <citation type="submission" date="2003-12" db="UniProtKB">
        <title>Comparative study of protein profiles on pathogenic and nonpathogenic Naegleria species by 2D-PAGE.</title>
        <authorList>
            <person name="Omura M."/>
            <person name="Furushima-Shimogawara R."/>
            <person name="Izumiyama S."/>
            <person name="Endo T."/>
        </authorList>
    </citation>
    <scope>PROTEIN SEQUENCE</scope>
    <source>
        <strain>ATCC 30214 / Nf 66</strain>
    </source>
</reference>
<keyword id="KW-0903">Direct protein sequencing</keyword>
<evidence type="ECO:0000305" key="1"/>
<name>NF41_NAEFO</name>
<protein>
    <recommendedName>
        <fullName>Unknown protein NF041 from 2D-PAGE</fullName>
    </recommendedName>
</protein>
<comment type="miscellaneous">
    <text evidence="1">On the 2D-gel the determined pI of this unknown protein is: 5.9, its MW is: 47.0 kDa.</text>
</comment>